<evidence type="ECO:0000255" key="1">
    <source>
        <dbReference type="HAMAP-Rule" id="MF_00041"/>
    </source>
</evidence>
<name>SYC_RALPJ</name>
<accession>B2U9P8</accession>
<sequence>MESLKIYNTLAREKQTFVPIEPGRVRMYVCGMTVYDYCHVGHARVMVVFDMVQRWLRAAGYDVTYVRNITDIDDKIIKRAVENGETMSALTGRFIAAMHEDADALGVQRPDHEPRATEYVPQMLSMIGRLQTNGLAYQATDGDVNYAVRKFPGYGKLSGKSLEDLRAGERVAANDAKQDPLDFVLWKSAKADEPAESRWASPWGEGRPGWHIECSAMSCELLGEHFDLHGGGADLQFPHHENEIAQSEGATGKTFVNMWMHNGFVRVNDEKMSKSLGNFFTIRDVLKVYDAEVVRFFILRSHYRSDLNYSDAHLDDARHALTRLYTALKDVPAAVGAKPDWSESHGKRFLEAMNDDFNTPVAVSVLFELASEVNKTRSPELASQLAALAGVIGLLGRDPHVFLQGGVSADGVDAAEVEARIEERRAAKAARDFARADAIRADLLAAGIVLEDKPGGLTEWRRA</sequence>
<proteinExistence type="inferred from homology"/>
<dbReference type="EC" id="6.1.1.16" evidence="1"/>
<dbReference type="EMBL" id="CP001068">
    <property type="protein sequence ID" value="ACD26156.1"/>
    <property type="molecule type" value="Genomic_DNA"/>
</dbReference>
<dbReference type="SMR" id="B2U9P8"/>
<dbReference type="STRING" id="402626.Rpic_1008"/>
<dbReference type="KEGG" id="rpi:Rpic_1008"/>
<dbReference type="PATRIC" id="fig|402626.5.peg.2211"/>
<dbReference type="eggNOG" id="COG0215">
    <property type="taxonomic scope" value="Bacteria"/>
</dbReference>
<dbReference type="HOGENOM" id="CLU_013528_0_1_4"/>
<dbReference type="GO" id="GO:0005829">
    <property type="term" value="C:cytosol"/>
    <property type="evidence" value="ECO:0007669"/>
    <property type="project" value="TreeGrafter"/>
</dbReference>
<dbReference type="GO" id="GO:0005524">
    <property type="term" value="F:ATP binding"/>
    <property type="evidence" value="ECO:0007669"/>
    <property type="project" value="UniProtKB-UniRule"/>
</dbReference>
<dbReference type="GO" id="GO:0004817">
    <property type="term" value="F:cysteine-tRNA ligase activity"/>
    <property type="evidence" value="ECO:0007669"/>
    <property type="project" value="UniProtKB-UniRule"/>
</dbReference>
<dbReference type="GO" id="GO:0008270">
    <property type="term" value="F:zinc ion binding"/>
    <property type="evidence" value="ECO:0007669"/>
    <property type="project" value="UniProtKB-UniRule"/>
</dbReference>
<dbReference type="GO" id="GO:0006423">
    <property type="term" value="P:cysteinyl-tRNA aminoacylation"/>
    <property type="evidence" value="ECO:0007669"/>
    <property type="project" value="UniProtKB-UniRule"/>
</dbReference>
<dbReference type="CDD" id="cd07963">
    <property type="entry name" value="Anticodon_Ia_Cys"/>
    <property type="match status" value="1"/>
</dbReference>
<dbReference type="CDD" id="cd00672">
    <property type="entry name" value="CysRS_core"/>
    <property type="match status" value="1"/>
</dbReference>
<dbReference type="FunFam" id="3.40.50.620:FF:000009">
    <property type="entry name" value="Cysteine--tRNA ligase"/>
    <property type="match status" value="1"/>
</dbReference>
<dbReference type="Gene3D" id="1.20.120.1910">
    <property type="entry name" value="Cysteine-tRNA ligase, C-terminal anti-codon recognition domain"/>
    <property type="match status" value="1"/>
</dbReference>
<dbReference type="Gene3D" id="3.40.50.620">
    <property type="entry name" value="HUPs"/>
    <property type="match status" value="1"/>
</dbReference>
<dbReference type="HAMAP" id="MF_00041">
    <property type="entry name" value="Cys_tRNA_synth"/>
    <property type="match status" value="1"/>
</dbReference>
<dbReference type="InterPro" id="IPR015803">
    <property type="entry name" value="Cys-tRNA-ligase"/>
</dbReference>
<dbReference type="InterPro" id="IPR015273">
    <property type="entry name" value="Cys-tRNA-synt_Ia_DALR"/>
</dbReference>
<dbReference type="InterPro" id="IPR024909">
    <property type="entry name" value="Cys-tRNA/MSH_ligase"/>
</dbReference>
<dbReference type="InterPro" id="IPR014729">
    <property type="entry name" value="Rossmann-like_a/b/a_fold"/>
</dbReference>
<dbReference type="InterPro" id="IPR032678">
    <property type="entry name" value="tRNA-synt_1_cat_dom"/>
</dbReference>
<dbReference type="InterPro" id="IPR009080">
    <property type="entry name" value="tRNAsynth_Ia_anticodon-bd"/>
</dbReference>
<dbReference type="NCBIfam" id="TIGR00435">
    <property type="entry name" value="cysS"/>
    <property type="match status" value="1"/>
</dbReference>
<dbReference type="PANTHER" id="PTHR10890:SF3">
    <property type="entry name" value="CYSTEINE--TRNA LIGASE, CYTOPLASMIC"/>
    <property type="match status" value="1"/>
</dbReference>
<dbReference type="PANTHER" id="PTHR10890">
    <property type="entry name" value="CYSTEINYL-TRNA SYNTHETASE"/>
    <property type="match status" value="1"/>
</dbReference>
<dbReference type="Pfam" id="PF09190">
    <property type="entry name" value="DALR_2"/>
    <property type="match status" value="1"/>
</dbReference>
<dbReference type="Pfam" id="PF01406">
    <property type="entry name" value="tRNA-synt_1e"/>
    <property type="match status" value="1"/>
</dbReference>
<dbReference type="PRINTS" id="PR00983">
    <property type="entry name" value="TRNASYNTHCYS"/>
</dbReference>
<dbReference type="SMART" id="SM00840">
    <property type="entry name" value="DALR_2"/>
    <property type="match status" value="1"/>
</dbReference>
<dbReference type="SUPFAM" id="SSF47323">
    <property type="entry name" value="Anticodon-binding domain of a subclass of class I aminoacyl-tRNA synthetases"/>
    <property type="match status" value="1"/>
</dbReference>
<dbReference type="SUPFAM" id="SSF52374">
    <property type="entry name" value="Nucleotidylyl transferase"/>
    <property type="match status" value="1"/>
</dbReference>
<protein>
    <recommendedName>
        <fullName evidence="1">Cysteine--tRNA ligase</fullName>
        <ecNumber evidence="1">6.1.1.16</ecNumber>
    </recommendedName>
    <alternativeName>
        <fullName evidence="1">Cysteinyl-tRNA synthetase</fullName>
        <shortName evidence="1">CysRS</shortName>
    </alternativeName>
</protein>
<feature type="chain" id="PRO_1000090860" description="Cysteine--tRNA ligase">
    <location>
        <begin position="1"/>
        <end position="463"/>
    </location>
</feature>
<feature type="short sequence motif" description="'HIGH' region">
    <location>
        <begin position="32"/>
        <end position="42"/>
    </location>
</feature>
<feature type="short sequence motif" description="'KMSKS' region">
    <location>
        <begin position="271"/>
        <end position="275"/>
    </location>
</feature>
<feature type="binding site" evidence="1">
    <location>
        <position position="30"/>
    </location>
    <ligand>
        <name>Zn(2+)</name>
        <dbReference type="ChEBI" id="CHEBI:29105"/>
    </ligand>
</feature>
<feature type="binding site" evidence="1">
    <location>
        <position position="214"/>
    </location>
    <ligand>
        <name>Zn(2+)</name>
        <dbReference type="ChEBI" id="CHEBI:29105"/>
    </ligand>
</feature>
<feature type="binding site" evidence="1">
    <location>
        <position position="239"/>
    </location>
    <ligand>
        <name>Zn(2+)</name>
        <dbReference type="ChEBI" id="CHEBI:29105"/>
    </ligand>
</feature>
<feature type="binding site" evidence="1">
    <location>
        <position position="243"/>
    </location>
    <ligand>
        <name>Zn(2+)</name>
        <dbReference type="ChEBI" id="CHEBI:29105"/>
    </ligand>
</feature>
<feature type="binding site" evidence="1">
    <location>
        <position position="274"/>
    </location>
    <ligand>
        <name>ATP</name>
        <dbReference type="ChEBI" id="CHEBI:30616"/>
    </ligand>
</feature>
<gene>
    <name evidence="1" type="primary">cysS</name>
    <name type="ordered locus">Rpic_1008</name>
</gene>
<organism>
    <name type="scientific">Ralstonia pickettii (strain 12J)</name>
    <dbReference type="NCBI Taxonomy" id="402626"/>
    <lineage>
        <taxon>Bacteria</taxon>
        <taxon>Pseudomonadati</taxon>
        <taxon>Pseudomonadota</taxon>
        <taxon>Betaproteobacteria</taxon>
        <taxon>Burkholderiales</taxon>
        <taxon>Burkholderiaceae</taxon>
        <taxon>Ralstonia</taxon>
    </lineage>
</organism>
<comment type="catalytic activity">
    <reaction evidence="1">
        <text>tRNA(Cys) + L-cysteine + ATP = L-cysteinyl-tRNA(Cys) + AMP + diphosphate</text>
        <dbReference type="Rhea" id="RHEA:17773"/>
        <dbReference type="Rhea" id="RHEA-COMP:9661"/>
        <dbReference type="Rhea" id="RHEA-COMP:9679"/>
        <dbReference type="ChEBI" id="CHEBI:30616"/>
        <dbReference type="ChEBI" id="CHEBI:33019"/>
        <dbReference type="ChEBI" id="CHEBI:35235"/>
        <dbReference type="ChEBI" id="CHEBI:78442"/>
        <dbReference type="ChEBI" id="CHEBI:78517"/>
        <dbReference type="ChEBI" id="CHEBI:456215"/>
        <dbReference type="EC" id="6.1.1.16"/>
    </reaction>
</comment>
<comment type="cofactor">
    <cofactor evidence="1">
        <name>Zn(2+)</name>
        <dbReference type="ChEBI" id="CHEBI:29105"/>
    </cofactor>
    <text evidence="1">Binds 1 zinc ion per subunit.</text>
</comment>
<comment type="subunit">
    <text evidence="1">Monomer.</text>
</comment>
<comment type="subcellular location">
    <subcellularLocation>
        <location evidence="1">Cytoplasm</location>
    </subcellularLocation>
</comment>
<comment type="similarity">
    <text evidence="1">Belongs to the class-I aminoacyl-tRNA synthetase family.</text>
</comment>
<reference key="1">
    <citation type="submission" date="2008-05" db="EMBL/GenBank/DDBJ databases">
        <title>Complete sequence of chromosome 1 of Ralstonia pickettii 12J.</title>
        <authorList>
            <person name="Lucas S."/>
            <person name="Copeland A."/>
            <person name="Lapidus A."/>
            <person name="Glavina del Rio T."/>
            <person name="Dalin E."/>
            <person name="Tice H."/>
            <person name="Bruce D."/>
            <person name="Goodwin L."/>
            <person name="Pitluck S."/>
            <person name="Meincke L."/>
            <person name="Brettin T."/>
            <person name="Detter J.C."/>
            <person name="Han C."/>
            <person name="Kuske C.R."/>
            <person name="Schmutz J."/>
            <person name="Larimer F."/>
            <person name="Land M."/>
            <person name="Hauser L."/>
            <person name="Kyrpides N."/>
            <person name="Mikhailova N."/>
            <person name="Marsh T."/>
            <person name="Richardson P."/>
        </authorList>
    </citation>
    <scope>NUCLEOTIDE SEQUENCE [LARGE SCALE GENOMIC DNA]</scope>
    <source>
        <strain>12J</strain>
    </source>
</reference>
<keyword id="KW-0030">Aminoacyl-tRNA synthetase</keyword>
<keyword id="KW-0067">ATP-binding</keyword>
<keyword id="KW-0963">Cytoplasm</keyword>
<keyword id="KW-0436">Ligase</keyword>
<keyword id="KW-0479">Metal-binding</keyword>
<keyword id="KW-0547">Nucleotide-binding</keyword>
<keyword id="KW-0648">Protein biosynthesis</keyword>
<keyword id="KW-0862">Zinc</keyword>